<comment type="function">
    <text evidence="1">Catalyzes the oxidation of 5,10-methylenetetrahydrofolate to 5,10-methenyltetrahydrofolate and then the hydrolysis of 5,10-methenyltetrahydrofolate to 10-formyltetrahydrofolate.</text>
</comment>
<comment type="catalytic activity">
    <reaction evidence="1">
        <text>(6R)-5,10-methylene-5,6,7,8-tetrahydrofolate + NADP(+) = (6R)-5,10-methenyltetrahydrofolate + NADPH</text>
        <dbReference type="Rhea" id="RHEA:22812"/>
        <dbReference type="ChEBI" id="CHEBI:15636"/>
        <dbReference type="ChEBI" id="CHEBI:57455"/>
        <dbReference type="ChEBI" id="CHEBI:57783"/>
        <dbReference type="ChEBI" id="CHEBI:58349"/>
        <dbReference type="EC" id="1.5.1.5"/>
    </reaction>
</comment>
<comment type="catalytic activity">
    <reaction evidence="1">
        <text>(6R)-5,10-methenyltetrahydrofolate + H2O = (6R)-10-formyltetrahydrofolate + H(+)</text>
        <dbReference type="Rhea" id="RHEA:23700"/>
        <dbReference type="ChEBI" id="CHEBI:15377"/>
        <dbReference type="ChEBI" id="CHEBI:15378"/>
        <dbReference type="ChEBI" id="CHEBI:57455"/>
        <dbReference type="ChEBI" id="CHEBI:195366"/>
        <dbReference type="EC" id="3.5.4.9"/>
    </reaction>
</comment>
<comment type="pathway">
    <text evidence="1">One-carbon metabolism; tetrahydrofolate interconversion.</text>
</comment>
<comment type="subunit">
    <text evidence="1">Homodimer.</text>
</comment>
<comment type="similarity">
    <text evidence="1">Belongs to the tetrahydrofolate dehydrogenase/cyclohydrolase family.</text>
</comment>
<protein>
    <recommendedName>
        <fullName evidence="1">Bifunctional protein FolD</fullName>
    </recommendedName>
    <domain>
        <recommendedName>
            <fullName evidence="1">Methylenetetrahydrofolate dehydrogenase</fullName>
            <ecNumber evidence="1">1.5.1.5</ecNumber>
        </recommendedName>
    </domain>
    <domain>
        <recommendedName>
            <fullName evidence="1">Methenyltetrahydrofolate cyclohydrolase</fullName>
            <ecNumber evidence="1">3.5.4.9</ecNumber>
        </recommendedName>
    </domain>
</protein>
<feature type="chain" id="PRO_0000305824" description="Bifunctional protein FolD">
    <location>
        <begin position="1"/>
        <end position="290"/>
    </location>
</feature>
<feature type="binding site" evidence="1">
    <location>
        <begin position="166"/>
        <end position="168"/>
    </location>
    <ligand>
        <name>NADP(+)</name>
        <dbReference type="ChEBI" id="CHEBI:58349"/>
    </ligand>
</feature>
<feature type="binding site" evidence="1">
    <location>
        <position position="191"/>
    </location>
    <ligand>
        <name>NADP(+)</name>
        <dbReference type="ChEBI" id="CHEBI:58349"/>
    </ligand>
</feature>
<feature type="binding site" evidence="1">
    <location>
        <position position="232"/>
    </location>
    <ligand>
        <name>NADP(+)</name>
        <dbReference type="ChEBI" id="CHEBI:58349"/>
    </ligand>
</feature>
<keyword id="KW-0028">Amino-acid biosynthesis</keyword>
<keyword id="KW-0368">Histidine biosynthesis</keyword>
<keyword id="KW-0378">Hydrolase</keyword>
<keyword id="KW-0486">Methionine biosynthesis</keyword>
<keyword id="KW-0511">Multifunctional enzyme</keyword>
<keyword id="KW-0521">NADP</keyword>
<keyword id="KW-0554">One-carbon metabolism</keyword>
<keyword id="KW-0560">Oxidoreductase</keyword>
<keyword id="KW-0658">Purine biosynthesis</keyword>
<keyword id="KW-1185">Reference proteome</keyword>
<organism>
    <name type="scientific">Halorhodospira halophila (strain DSM 244 / SL1)</name>
    <name type="common">Ectothiorhodospira halophila (strain DSM 244 / SL1)</name>
    <dbReference type="NCBI Taxonomy" id="349124"/>
    <lineage>
        <taxon>Bacteria</taxon>
        <taxon>Pseudomonadati</taxon>
        <taxon>Pseudomonadota</taxon>
        <taxon>Gammaproteobacteria</taxon>
        <taxon>Chromatiales</taxon>
        <taxon>Ectothiorhodospiraceae</taxon>
        <taxon>Halorhodospira</taxon>
    </lineage>
</organism>
<name>FOLD_HALHL</name>
<accession>A1WUN4</accession>
<sequence length="290" mass="31133">MPAQILDGKAIAAKRRALVGEAVGQRIERGLRRPGLAVILVGQNPASAVYVRNKRRACEEAGILSRAYDLDADVSEGELLERIDRLNADPEIDGILVQLPLPGHIDEQTVIERIDPVKDVDGFHPENMGRLALRLPGLRPCTPRGVMTLLHHTGIELEGRDAVVLGQSNIVGRPMTLELLNARCTVTVCHSRTRNVAERVRQADLVVASVGKPGLIQGDWIGEGAVVIDVGINRLDSGKLTGDVDFEAASQRASWITPVPGGVGPMTVATLLENTLDAARNRDELTAAAC</sequence>
<evidence type="ECO:0000255" key="1">
    <source>
        <dbReference type="HAMAP-Rule" id="MF_01576"/>
    </source>
</evidence>
<proteinExistence type="inferred from homology"/>
<gene>
    <name evidence="1" type="primary">folD</name>
    <name type="ordered locus">Hhal_0610</name>
</gene>
<dbReference type="EC" id="1.5.1.5" evidence="1"/>
<dbReference type="EC" id="3.5.4.9" evidence="1"/>
<dbReference type="EMBL" id="CP000544">
    <property type="protein sequence ID" value="ABM61396.1"/>
    <property type="molecule type" value="Genomic_DNA"/>
</dbReference>
<dbReference type="RefSeq" id="WP_011813419.1">
    <property type="nucleotide sequence ID" value="NC_008789.1"/>
</dbReference>
<dbReference type="SMR" id="A1WUN4"/>
<dbReference type="STRING" id="349124.Hhal_0610"/>
<dbReference type="KEGG" id="hha:Hhal_0610"/>
<dbReference type="eggNOG" id="COG0190">
    <property type="taxonomic scope" value="Bacteria"/>
</dbReference>
<dbReference type="HOGENOM" id="CLU_034045_2_1_6"/>
<dbReference type="OrthoDB" id="9803580at2"/>
<dbReference type="UniPathway" id="UPA00193"/>
<dbReference type="Proteomes" id="UP000000647">
    <property type="component" value="Chromosome"/>
</dbReference>
<dbReference type="GO" id="GO:0005829">
    <property type="term" value="C:cytosol"/>
    <property type="evidence" value="ECO:0007669"/>
    <property type="project" value="TreeGrafter"/>
</dbReference>
<dbReference type="GO" id="GO:0004477">
    <property type="term" value="F:methenyltetrahydrofolate cyclohydrolase activity"/>
    <property type="evidence" value="ECO:0007669"/>
    <property type="project" value="UniProtKB-UniRule"/>
</dbReference>
<dbReference type="GO" id="GO:0004488">
    <property type="term" value="F:methylenetetrahydrofolate dehydrogenase (NADP+) activity"/>
    <property type="evidence" value="ECO:0007669"/>
    <property type="project" value="UniProtKB-UniRule"/>
</dbReference>
<dbReference type="GO" id="GO:0000105">
    <property type="term" value="P:L-histidine biosynthetic process"/>
    <property type="evidence" value="ECO:0007669"/>
    <property type="project" value="UniProtKB-KW"/>
</dbReference>
<dbReference type="GO" id="GO:0009086">
    <property type="term" value="P:methionine biosynthetic process"/>
    <property type="evidence" value="ECO:0007669"/>
    <property type="project" value="UniProtKB-KW"/>
</dbReference>
<dbReference type="GO" id="GO:0006164">
    <property type="term" value="P:purine nucleotide biosynthetic process"/>
    <property type="evidence" value="ECO:0007669"/>
    <property type="project" value="UniProtKB-KW"/>
</dbReference>
<dbReference type="GO" id="GO:0035999">
    <property type="term" value="P:tetrahydrofolate interconversion"/>
    <property type="evidence" value="ECO:0007669"/>
    <property type="project" value="UniProtKB-UniRule"/>
</dbReference>
<dbReference type="CDD" id="cd01080">
    <property type="entry name" value="NAD_bind_m-THF_DH_Cyclohyd"/>
    <property type="match status" value="1"/>
</dbReference>
<dbReference type="FunFam" id="3.40.50.720:FF:000006">
    <property type="entry name" value="Bifunctional protein FolD"/>
    <property type="match status" value="1"/>
</dbReference>
<dbReference type="FunFam" id="3.40.50.10860:FF:000005">
    <property type="entry name" value="C-1-tetrahydrofolate synthase, cytoplasmic, putative"/>
    <property type="match status" value="1"/>
</dbReference>
<dbReference type="Gene3D" id="3.40.50.10860">
    <property type="entry name" value="Leucine Dehydrogenase, chain A, domain 1"/>
    <property type="match status" value="1"/>
</dbReference>
<dbReference type="Gene3D" id="3.40.50.720">
    <property type="entry name" value="NAD(P)-binding Rossmann-like Domain"/>
    <property type="match status" value="1"/>
</dbReference>
<dbReference type="HAMAP" id="MF_01576">
    <property type="entry name" value="THF_DHG_CYH"/>
    <property type="match status" value="1"/>
</dbReference>
<dbReference type="InterPro" id="IPR046346">
    <property type="entry name" value="Aminoacid_DH-like_N_sf"/>
</dbReference>
<dbReference type="InterPro" id="IPR036291">
    <property type="entry name" value="NAD(P)-bd_dom_sf"/>
</dbReference>
<dbReference type="InterPro" id="IPR000672">
    <property type="entry name" value="THF_DH/CycHdrlase"/>
</dbReference>
<dbReference type="InterPro" id="IPR020630">
    <property type="entry name" value="THF_DH/CycHdrlase_cat_dom"/>
</dbReference>
<dbReference type="InterPro" id="IPR020867">
    <property type="entry name" value="THF_DH/CycHdrlase_CS"/>
</dbReference>
<dbReference type="InterPro" id="IPR020631">
    <property type="entry name" value="THF_DH/CycHdrlase_NAD-bd_dom"/>
</dbReference>
<dbReference type="NCBIfam" id="NF008058">
    <property type="entry name" value="PRK10792.1"/>
    <property type="match status" value="1"/>
</dbReference>
<dbReference type="NCBIfam" id="NF010783">
    <property type="entry name" value="PRK14186.1"/>
    <property type="match status" value="1"/>
</dbReference>
<dbReference type="PANTHER" id="PTHR48099:SF5">
    <property type="entry name" value="C-1-TETRAHYDROFOLATE SYNTHASE, CYTOPLASMIC"/>
    <property type="match status" value="1"/>
</dbReference>
<dbReference type="PANTHER" id="PTHR48099">
    <property type="entry name" value="C-1-TETRAHYDROFOLATE SYNTHASE, CYTOPLASMIC-RELATED"/>
    <property type="match status" value="1"/>
</dbReference>
<dbReference type="Pfam" id="PF00763">
    <property type="entry name" value="THF_DHG_CYH"/>
    <property type="match status" value="1"/>
</dbReference>
<dbReference type="Pfam" id="PF02882">
    <property type="entry name" value="THF_DHG_CYH_C"/>
    <property type="match status" value="1"/>
</dbReference>
<dbReference type="PRINTS" id="PR00085">
    <property type="entry name" value="THFDHDRGNASE"/>
</dbReference>
<dbReference type="SUPFAM" id="SSF53223">
    <property type="entry name" value="Aminoacid dehydrogenase-like, N-terminal domain"/>
    <property type="match status" value="1"/>
</dbReference>
<dbReference type="SUPFAM" id="SSF51735">
    <property type="entry name" value="NAD(P)-binding Rossmann-fold domains"/>
    <property type="match status" value="1"/>
</dbReference>
<dbReference type="PROSITE" id="PS00766">
    <property type="entry name" value="THF_DHG_CYH_1"/>
    <property type="match status" value="1"/>
</dbReference>
<dbReference type="PROSITE" id="PS00767">
    <property type="entry name" value="THF_DHG_CYH_2"/>
    <property type="match status" value="1"/>
</dbReference>
<reference key="1">
    <citation type="submission" date="2006-12" db="EMBL/GenBank/DDBJ databases">
        <title>Complete sequence of Halorhodospira halophila SL1.</title>
        <authorList>
            <consortium name="US DOE Joint Genome Institute"/>
            <person name="Copeland A."/>
            <person name="Lucas S."/>
            <person name="Lapidus A."/>
            <person name="Barry K."/>
            <person name="Detter J.C."/>
            <person name="Glavina del Rio T."/>
            <person name="Hammon N."/>
            <person name="Israni S."/>
            <person name="Dalin E."/>
            <person name="Tice H."/>
            <person name="Pitluck S."/>
            <person name="Saunders E."/>
            <person name="Brettin T."/>
            <person name="Bruce D."/>
            <person name="Han C."/>
            <person name="Tapia R."/>
            <person name="Schmutz J."/>
            <person name="Larimer F."/>
            <person name="Land M."/>
            <person name="Hauser L."/>
            <person name="Kyrpides N."/>
            <person name="Mikhailova N."/>
            <person name="Hoff W."/>
            <person name="Richardson P."/>
        </authorList>
    </citation>
    <scope>NUCLEOTIDE SEQUENCE [LARGE SCALE GENOMIC DNA]</scope>
    <source>
        <strain>DSM 244 / SL1</strain>
    </source>
</reference>